<evidence type="ECO:0000255" key="1">
    <source>
        <dbReference type="HAMAP-Rule" id="MF_00158"/>
    </source>
</evidence>
<proteinExistence type="inferred from homology"/>
<name>PANC_FLAPJ</name>
<organism>
    <name type="scientific">Flavobacterium psychrophilum (strain ATCC 49511 / DSM 21280 / CIP 103535 / JIP02/86)</name>
    <dbReference type="NCBI Taxonomy" id="402612"/>
    <lineage>
        <taxon>Bacteria</taxon>
        <taxon>Pseudomonadati</taxon>
        <taxon>Bacteroidota</taxon>
        <taxon>Flavobacteriia</taxon>
        <taxon>Flavobacteriales</taxon>
        <taxon>Flavobacteriaceae</taxon>
        <taxon>Flavobacterium</taxon>
    </lineage>
</organism>
<dbReference type="EC" id="6.3.2.1" evidence="1"/>
<dbReference type="EMBL" id="AM398681">
    <property type="protein sequence ID" value="CAL42226.1"/>
    <property type="molecule type" value="Genomic_DNA"/>
</dbReference>
<dbReference type="RefSeq" id="WP_011962287.1">
    <property type="nucleotide sequence ID" value="NC_009613.3"/>
</dbReference>
<dbReference type="RefSeq" id="YP_001295046.1">
    <property type="nucleotide sequence ID" value="NC_009613.3"/>
</dbReference>
<dbReference type="SMR" id="A6GVV3"/>
<dbReference type="STRING" id="402612.FP0108"/>
<dbReference type="EnsemblBacteria" id="CAL42226">
    <property type="protein sequence ID" value="CAL42226"/>
    <property type="gene ID" value="FP0108"/>
</dbReference>
<dbReference type="GeneID" id="66553736"/>
<dbReference type="KEGG" id="fps:FP0108"/>
<dbReference type="PATRIC" id="fig|402612.5.peg.111"/>
<dbReference type="eggNOG" id="COG0414">
    <property type="taxonomic scope" value="Bacteria"/>
</dbReference>
<dbReference type="HOGENOM" id="CLU_047148_0_0_10"/>
<dbReference type="OrthoDB" id="9773087at2"/>
<dbReference type="UniPathway" id="UPA00028">
    <property type="reaction ID" value="UER00005"/>
</dbReference>
<dbReference type="Proteomes" id="UP000006394">
    <property type="component" value="Chromosome"/>
</dbReference>
<dbReference type="GO" id="GO:0005829">
    <property type="term" value="C:cytosol"/>
    <property type="evidence" value="ECO:0007669"/>
    <property type="project" value="TreeGrafter"/>
</dbReference>
<dbReference type="GO" id="GO:0005524">
    <property type="term" value="F:ATP binding"/>
    <property type="evidence" value="ECO:0007669"/>
    <property type="project" value="UniProtKB-KW"/>
</dbReference>
<dbReference type="GO" id="GO:0004592">
    <property type="term" value="F:pantoate-beta-alanine ligase activity"/>
    <property type="evidence" value="ECO:0007669"/>
    <property type="project" value="UniProtKB-UniRule"/>
</dbReference>
<dbReference type="GO" id="GO:0015940">
    <property type="term" value="P:pantothenate biosynthetic process"/>
    <property type="evidence" value="ECO:0007669"/>
    <property type="project" value="UniProtKB-UniRule"/>
</dbReference>
<dbReference type="CDD" id="cd00560">
    <property type="entry name" value="PanC"/>
    <property type="match status" value="1"/>
</dbReference>
<dbReference type="Gene3D" id="3.40.50.620">
    <property type="entry name" value="HUPs"/>
    <property type="match status" value="1"/>
</dbReference>
<dbReference type="Gene3D" id="3.30.1300.10">
    <property type="entry name" value="Pantoate-beta-alanine ligase, C-terminal domain"/>
    <property type="match status" value="1"/>
</dbReference>
<dbReference type="HAMAP" id="MF_00158">
    <property type="entry name" value="PanC"/>
    <property type="match status" value="1"/>
</dbReference>
<dbReference type="InterPro" id="IPR004821">
    <property type="entry name" value="Cyt_trans-like"/>
</dbReference>
<dbReference type="InterPro" id="IPR003721">
    <property type="entry name" value="Pantoate_ligase"/>
</dbReference>
<dbReference type="InterPro" id="IPR042176">
    <property type="entry name" value="Pantoate_ligase_C"/>
</dbReference>
<dbReference type="InterPro" id="IPR014729">
    <property type="entry name" value="Rossmann-like_a/b/a_fold"/>
</dbReference>
<dbReference type="NCBIfam" id="TIGR00125">
    <property type="entry name" value="cyt_tran_rel"/>
    <property type="match status" value="1"/>
</dbReference>
<dbReference type="NCBIfam" id="TIGR00018">
    <property type="entry name" value="panC"/>
    <property type="match status" value="1"/>
</dbReference>
<dbReference type="PANTHER" id="PTHR21299">
    <property type="entry name" value="CYTIDYLATE KINASE/PANTOATE-BETA-ALANINE LIGASE"/>
    <property type="match status" value="1"/>
</dbReference>
<dbReference type="PANTHER" id="PTHR21299:SF1">
    <property type="entry name" value="PANTOATE--BETA-ALANINE LIGASE"/>
    <property type="match status" value="1"/>
</dbReference>
<dbReference type="Pfam" id="PF02569">
    <property type="entry name" value="Pantoate_ligase"/>
    <property type="match status" value="1"/>
</dbReference>
<dbReference type="SUPFAM" id="SSF52374">
    <property type="entry name" value="Nucleotidylyl transferase"/>
    <property type="match status" value="1"/>
</dbReference>
<protein>
    <recommendedName>
        <fullName evidence="1">Pantothenate synthetase</fullName>
        <shortName evidence="1">PS</shortName>
        <ecNumber evidence="1">6.3.2.1</ecNumber>
    </recommendedName>
    <alternativeName>
        <fullName evidence="1">Pantoate--beta-alanine ligase</fullName>
    </alternativeName>
    <alternativeName>
        <fullName evidence="1">Pantoate-activating enzyme</fullName>
    </alternativeName>
</protein>
<reference key="1">
    <citation type="journal article" date="2007" name="Nat. Biotechnol.">
        <title>Complete genome sequence of the fish pathogen Flavobacterium psychrophilum.</title>
        <authorList>
            <person name="Duchaud E."/>
            <person name="Boussaha M."/>
            <person name="Loux V."/>
            <person name="Bernardet J.-F."/>
            <person name="Michel C."/>
            <person name="Kerouault B."/>
            <person name="Mondot S."/>
            <person name="Nicolas P."/>
            <person name="Bossy R."/>
            <person name="Caron C."/>
            <person name="Bessieres P."/>
            <person name="Gibrat J.-F."/>
            <person name="Claverol S."/>
            <person name="Dumetz F."/>
            <person name="Le Henaff M."/>
            <person name="Benmansour A."/>
        </authorList>
    </citation>
    <scope>NUCLEOTIDE SEQUENCE [LARGE SCALE GENOMIC DNA]</scope>
    <source>
        <strain>ATCC 49511 / DSM 21280 / CIP 103535 / JIP02/86</strain>
    </source>
</reference>
<keyword id="KW-0067">ATP-binding</keyword>
<keyword id="KW-0963">Cytoplasm</keyword>
<keyword id="KW-0436">Ligase</keyword>
<keyword id="KW-0547">Nucleotide-binding</keyword>
<keyword id="KW-0566">Pantothenate biosynthesis</keyword>
<keyword id="KW-1185">Reference proteome</keyword>
<gene>
    <name evidence="1" type="primary">panC</name>
    <name type="ordered locus">FP0108</name>
</gene>
<sequence>MIIFEKQTDVKTYLKPFLQDQKTIGFVPTMGALHQGHLSLMKESLQNNDHTVVSIFVNPTQFNNPEDLKKYPRTLESDVEKIKLLNHKIIIYAPTVEDIYEGKTASKSFDYDGLELQMEGKHRPGHFDGVGTIVKKLFEIVNPTHAYFGEKDFQQLAIVRKLVQKNKINTKIVGCKILREANQLAMSSRNERLTADERTKAAMIYNTLAEAKKLFGTKSANEVTKWVTKTFENQSMFELEYFEITDEQTLLTCKRKNKNKKYRAFIAVFVNNIKLIDNISLK</sequence>
<comment type="function">
    <text evidence="1">Catalyzes the condensation of pantoate with beta-alanine in an ATP-dependent reaction via a pantoyl-adenylate intermediate.</text>
</comment>
<comment type="catalytic activity">
    <reaction evidence="1">
        <text>(R)-pantoate + beta-alanine + ATP = (R)-pantothenate + AMP + diphosphate + H(+)</text>
        <dbReference type="Rhea" id="RHEA:10912"/>
        <dbReference type="ChEBI" id="CHEBI:15378"/>
        <dbReference type="ChEBI" id="CHEBI:15980"/>
        <dbReference type="ChEBI" id="CHEBI:29032"/>
        <dbReference type="ChEBI" id="CHEBI:30616"/>
        <dbReference type="ChEBI" id="CHEBI:33019"/>
        <dbReference type="ChEBI" id="CHEBI:57966"/>
        <dbReference type="ChEBI" id="CHEBI:456215"/>
        <dbReference type="EC" id="6.3.2.1"/>
    </reaction>
</comment>
<comment type="pathway">
    <text evidence="1">Cofactor biosynthesis; (R)-pantothenate biosynthesis; (R)-pantothenate from (R)-pantoate and beta-alanine: step 1/1.</text>
</comment>
<comment type="subunit">
    <text evidence="1">Homodimer.</text>
</comment>
<comment type="subcellular location">
    <subcellularLocation>
        <location evidence="1">Cytoplasm</location>
    </subcellularLocation>
</comment>
<comment type="miscellaneous">
    <text evidence="1">The reaction proceeds by a bi uni uni bi ping pong mechanism.</text>
</comment>
<comment type="similarity">
    <text evidence="1">Belongs to the pantothenate synthetase family.</text>
</comment>
<accession>A6GVV3</accession>
<feature type="chain" id="PRO_0000305446" description="Pantothenate synthetase">
    <location>
        <begin position="1"/>
        <end position="282"/>
    </location>
</feature>
<feature type="active site" description="Proton donor" evidence="1">
    <location>
        <position position="37"/>
    </location>
</feature>
<feature type="binding site" evidence="1">
    <location>
        <begin position="30"/>
        <end position="37"/>
    </location>
    <ligand>
        <name>ATP</name>
        <dbReference type="ChEBI" id="CHEBI:30616"/>
    </ligand>
</feature>
<feature type="binding site" evidence="1">
    <location>
        <position position="61"/>
    </location>
    <ligand>
        <name>(R)-pantoate</name>
        <dbReference type="ChEBI" id="CHEBI:15980"/>
    </ligand>
</feature>
<feature type="binding site" evidence="1">
    <location>
        <position position="61"/>
    </location>
    <ligand>
        <name>beta-alanine</name>
        <dbReference type="ChEBI" id="CHEBI:57966"/>
    </ligand>
</feature>
<feature type="binding site" evidence="1">
    <location>
        <begin position="149"/>
        <end position="152"/>
    </location>
    <ligand>
        <name>ATP</name>
        <dbReference type="ChEBI" id="CHEBI:30616"/>
    </ligand>
</feature>
<feature type="binding site" evidence="1">
    <location>
        <position position="155"/>
    </location>
    <ligand>
        <name>(R)-pantoate</name>
        <dbReference type="ChEBI" id="CHEBI:15980"/>
    </ligand>
</feature>
<feature type="binding site" evidence="1">
    <location>
        <position position="178"/>
    </location>
    <ligand>
        <name>ATP</name>
        <dbReference type="ChEBI" id="CHEBI:30616"/>
    </ligand>
</feature>
<feature type="binding site" evidence="1">
    <location>
        <begin position="186"/>
        <end position="189"/>
    </location>
    <ligand>
        <name>ATP</name>
        <dbReference type="ChEBI" id="CHEBI:30616"/>
    </ligand>
</feature>